<reference key="1">
    <citation type="submission" date="2005-11" db="EMBL/GenBank/DDBJ databases">
        <authorList>
            <consortium name="NIH - Mammalian Gene Collection (MGC) project"/>
        </authorList>
    </citation>
    <scope>NUCLEOTIDE SEQUENCE [LARGE SCALE MRNA]</scope>
    <source>
        <strain>Crossbred X Angus</strain>
        <tissue>Liver</tissue>
    </source>
</reference>
<evidence type="ECO:0000250" key="1">
    <source>
        <dbReference type="UniProtKB" id="Q9BRT6"/>
    </source>
</evidence>
<evidence type="ECO:0000250" key="2">
    <source>
        <dbReference type="UniProtKB" id="Q9D945"/>
    </source>
</evidence>
<evidence type="ECO:0000256" key="3">
    <source>
        <dbReference type="SAM" id="MobiDB-lite"/>
    </source>
</evidence>
<evidence type="ECO:0000305" key="4"/>
<keyword id="KW-0158">Chromosome</keyword>
<keyword id="KW-1017">Isopeptide bond</keyword>
<keyword id="KW-0539">Nucleus</keyword>
<keyword id="KW-1185">Reference proteome</keyword>
<keyword id="KW-0832">Ubl conjugation</keyword>
<dbReference type="EMBL" id="BC109741">
    <property type="protein sequence ID" value="AAI09742.1"/>
    <property type="molecule type" value="mRNA"/>
</dbReference>
<dbReference type="RefSeq" id="NP_001033611.1">
    <property type="nucleotide sequence ID" value="NM_001038522.1"/>
</dbReference>
<dbReference type="RefSeq" id="XP_005206609.1">
    <property type="nucleotide sequence ID" value="XM_005206552.5"/>
</dbReference>
<dbReference type="SMR" id="Q2TBR9"/>
<dbReference type="FunCoup" id="Q2TBR9">
    <property type="interactions" value="1895"/>
</dbReference>
<dbReference type="STRING" id="9913.ENSBTAP00000002597"/>
<dbReference type="PaxDb" id="9913-ENSBTAP00000002597"/>
<dbReference type="Ensembl" id="ENSBTAT00000002597.3">
    <property type="protein sequence ID" value="ENSBTAP00000002597.2"/>
    <property type="gene ID" value="ENSBTAG00000002004.3"/>
</dbReference>
<dbReference type="GeneID" id="510518"/>
<dbReference type="KEGG" id="bta:510518"/>
<dbReference type="CTD" id="84298"/>
<dbReference type="VEuPathDB" id="HostDB:ENSBTAG00000002004"/>
<dbReference type="VGNC" id="VGNC:30917">
    <property type="gene designation" value="LLPH"/>
</dbReference>
<dbReference type="eggNOG" id="KOG4811">
    <property type="taxonomic scope" value="Eukaryota"/>
</dbReference>
<dbReference type="GeneTree" id="ENSGT00390000012979"/>
<dbReference type="HOGENOM" id="CLU_134502_0_0_1"/>
<dbReference type="InParanoid" id="Q2TBR9"/>
<dbReference type="OMA" id="YGNYPVW"/>
<dbReference type="OrthoDB" id="6257894at2759"/>
<dbReference type="TreeFam" id="TF314654"/>
<dbReference type="CD-CODE" id="D7FE2080">
    <property type="entry name" value="Nucleolus"/>
</dbReference>
<dbReference type="Proteomes" id="UP000009136">
    <property type="component" value="Chromosome 5"/>
</dbReference>
<dbReference type="Bgee" id="ENSBTAG00000002004">
    <property type="expression patterns" value="Expressed in oocyte and 108 other cell types or tissues"/>
</dbReference>
<dbReference type="GO" id="GO:0005694">
    <property type="term" value="C:chromosome"/>
    <property type="evidence" value="ECO:0007669"/>
    <property type="project" value="UniProtKB-SubCell"/>
</dbReference>
<dbReference type="GO" id="GO:0005730">
    <property type="term" value="C:nucleolus"/>
    <property type="evidence" value="ECO:0000318"/>
    <property type="project" value="GO_Central"/>
</dbReference>
<dbReference type="GO" id="GO:0001099">
    <property type="term" value="F:basal RNA polymerase II transcription machinery binding"/>
    <property type="evidence" value="ECO:0000318"/>
    <property type="project" value="GO_Central"/>
</dbReference>
<dbReference type="GO" id="GO:0097484">
    <property type="term" value="P:dendrite extension"/>
    <property type="evidence" value="ECO:0000318"/>
    <property type="project" value="GO_Central"/>
</dbReference>
<dbReference type="InterPro" id="IPR018784">
    <property type="entry name" value="LLPH-like"/>
</dbReference>
<dbReference type="PANTHER" id="PTHR34253">
    <property type="entry name" value="PROTEIN LLP HOMOLOG"/>
    <property type="match status" value="1"/>
</dbReference>
<dbReference type="PANTHER" id="PTHR34253:SF1">
    <property type="entry name" value="PROTEIN LLP HOMOLOG"/>
    <property type="match status" value="1"/>
</dbReference>
<dbReference type="Pfam" id="PF10169">
    <property type="entry name" value="LLPH"/>
    <property type="match status" value="1"/>
</dbReference>
<protein>
    <recommendedName>
        <fullName>Protein LLP homolog</fullName>
    </recommendedName>
    <alternativeName>
        <fullName>Protein LAPS18-like</fullName>
    </alternativeName>
</protein>
<comment type="function">
    <text evidence="2">In hippocampal neurons, regulates dendritic and spine growth and synaptic transmission.</text>
</comment>
<comment type="subunit">
    <text evidence="2">Interacts with CTCF, MYO1C and with the transcriptional machinery, including RNA polymerase II and TBP.</text>
</comment>
<comment type="subcellular location">
    <subcellularLocation>
        <location evidence="2">Nucleus</location>
        <location evidence="2">Nucleolus</location>
    </subcellularLocation>
    <subcellularLocation>
        <location evidence="1">Chromosome</location>
    </subcellularLocation>
    <text evidence="1 2">Cell-permeable protein. 22 hours after injection in the hippocampal area CA1, internalized by most cells at the injection site (By similarity). Localizes at the chromosome periphery during mitosis (By similarity).</text>
</comment>
<comment type="similarity">
    <text evidence="4">Belongs to the learning-associated protein family.</text>
</comment>
<proteinExistence type="evidence at transcript level"/>
<feature type="chain" id="PRO_0000274345" description="Protein LLP homolog">
    <location>
        <begin position="1"/>
        <end position="127"/>
    </location>
</feature>
<feature type="region of interest" description="Disordered" evidence="3">
    <location>
        <begin position="1"/>
        <end position="24"/>
    </location>
</feature>
<feature type="region of interest" description="Disordered" evidence="3">
    <location>
        <begin position="98"/>
        <end position="127"/>
    </location>
</feature>
<feature type="compositionally biased region" description="Basic residues" evidence="3">
    <location>
        <begin position="1"/>
        <end position="21"/>
    </location>
</feature>
<feature type="compositionally biased region" description="Basic residues" evidence="3">
    <location>
        <begin position="98"/>
        <end position="120"/>
    </location>
</feature>
<feature type="cross-link" description="Glycyl lysine isopeptide (Lys-Gly) (interchain with G-Cter in SUMO2)" evidence="1">
    <location>
        <position position="65"/>
    </location>
</feature>
<feature type="cross-link" description="Glycyl lysine isopeptide (Lys-Gly) (interchain with G-Cter in SUMO2)" evidence="1">
    <location>
        <position position="72"/>
    </location>
</feature>
<accession>Q2TBR9</accession>
<organism>
    <name type="scientific">Bos taurus</name>
    <name type="common">Bovine</name>
    <dbReference type="NCBI Taxonomy" id="9913"/>
    <lineage>
        <taxon>Eukaryota</taxon>
        <taxon>Metazoa</taxon>
        <taxon>Chordata</taxon>
        <taxon>Craniata</taxon>
        <taxon>Vertebrata</taxon>
        <taxon>Euteleostomi</taxon>
        <taxon>Mammalia</taxon>
        <taxon>Eutheria</taxon>
        <taxon>Laurasiatheria</taxon>
        <taxon>Artiodactyla</taxon>
        <taxon>Ruminantia</taxon>
        <taxon>Pecora</taxon>
        <taxon>Bovidae</taxon>
        <taxon>Bovinae</taxon>
        <taxon>Bos</taxon>
    </lineage>
</organism>
<name>LLPH_BOVIN</name>
<gene>
    <name type="primary">LLPH</name>
</gene>
<sequence>MAKSLRSKWKRKMRAEKRKKNAPKELSRLKSILKIDGDVLMKDVQEIATVVEPKHCQEKTQCVVKDETDDMKMETDIKRNKKTLLDQHGQYPIWMNQRQRKRLKAKRERKKGKSKVKAMKAAKGLTW</sequence>